<protein>
    <recommendedName>
        <fullName evidence="1">D-aminoacyl-tRNA deacylase</fullName>
        <shortName evidence="1">DTD</shortName>
        <ecNumber evidence="1">3.1.1.96</ecNumber>
    </recommendedName>
    <alternativeName>
        <fullName evidence="1">Gly-tRNA(Ala) deacylase</fullName>
    </alternativeName>
</protein>
<proteinExistence type="inferred from homology"/>
<keyword id="KW-0963">Cytoplasm</keyword>
<keyword id="KW-0378">Hydrolase</keyword>
<keyword id="KW-0694">RNA-binding</keyword>
<keyword id="KW-0820">tRNA-binding</keyword>
<accession>Q9JST7</accession>
<accession>A1ITW8</accession>
<comment type="function">
    <text evidence="1">An aminoacyl-tRNA editing enzyme that deacylates mischarged D-aminoacyl-tRNAs. Also deacylates mischarged glycyl-tRNA(Ala), protecting cells against glycine mischarging by AlaRS. Acts via tRNA-based rather than protein-based catalysis; rejects L-amino acids rather than detecting D-amino acids in the active site. By recycling D-aminoacyl-tRNA to D-amino acids and free tRNA molecules, this enzyme counteracts the toxicity associated with the formation of D-aminoacyl-tRNA entities in vivo and helps enforce protein L-homochirality.</text>
</comment>
<comment type="catalytic activity">
    <reaction evidence="1">
        <text>glycyl-tRNA(Ala) + H2O = tRNA(Ala) + glycine + H(+)</text>
        <dbReference type="Rhea" id="RHEA:53744"/>
        <dbReference type="Rhea" id="RHEA-COMP:9657"/>
        <dbReference type="Rhea" id="RHEA-COMP:13640"/>
        <dbReference type="ChEBI" id="CHEBI:15377"/>
        <dbReference type="ChEBI" id="CHEBI:15378"/>
        <dbReference type="ChEBI" id="CHEBI:57305"/>
        <dbReference type="ChEBI" id="CHEBI:78442"/>
        <dbReference type="ChEBI" id="CHEBI:78522"/>
        <dbReference type="EC" id="3.1.1.96"/>
    </reaction>
</comment>
<comment type="catalytic activity">
    <reaction evidence="1">
        <text>a D-aminoacyl-tRNA + H2O = a tRNA + a D-alpha-amino acid + H(+)</text>
        <dbReference type="Rhea" id="RHEA:13953"/>
        <dbReference type="Rhea" id="RHEA-COMP:10123"/>
        <dbReference type="Rhea" id="RHEA-COMP:10124"/>
        <dbReference type="ChEBI" id="CHEBI:15377"/>
        <dbReference type="ChEBI" id="CHEBI:15378"/>
        <dbReference type="ChEBI" id="CHEBI:59871"/>
        <dbReference type="ChEBI" id="CHEBI:78442"/>
        <dbReference type="ChEBI" id="CHEBI:79333"/>
        <dbReference type="EC" id="3.1.1.96"/>
    </reaction>
</comment>
<comment type="subunit">
    <text evidence="1">Homodimer.</text>
</comment>
<comment type="subcellular location">
    <subcellularLocation>
        <location evidence="1">Cytoplasm</location>
    </subcellularLocation>
</comment>
<comment type="domain">
    <text evidence="1">A Gly-cisPro motif from one monomer fits into the active site of the other monomer to allow specific chiral rejection of L-amino acids.</text>
</comment>
<comment type="similarity">
    <text evidence="1">Belongs to the DTD family.</text>
</comment>
<organism>
    <name type="scientific">Neisseria meningitidis serogroup A / serotype 4A (strain DSM 15465 / Z2491)</name>
    <dbReference type="NCBI Taxonomy" id="122587"/>
    <lineage>
        <taxon>Bacteria</taxon>
        <taxon>Pseudomonadati</taxon>
        <taxon>Pseudomonadota</taxon>
        <taxon>Betaproteobacteria</taxon>
        <taxon>Neisseriales</taxon>
        <taxon>Neisseriaceae</taxon>
        <taxon>Neisseria</taxon>
    </lineage>
</organism>
<reference key="1">
    <citation type="journal article" date="2000" name="Nature">
        <title>Complete DNA sequence of a serogroup A strain of Neisseria meningitidis Z2491.</title>
        <authorList>
            <person name="Parkhill J."/>
            <person name="Achtman M."/>
            <person name="James K.D."/>
            <person name="Bentley S.D."/>
            <person name="Churcher C.M."/>
            <person name="Klee S.R."/>
            <person name="Morelli G."/>
            <person name="Basham D."/>
            <person name="Brown D."/>
            <person name="Chillingworth T."/>
            <person name="Davies R.M."/>
            <person name="Davis P."/>
            <person name="Devlin K."/>
            <person name="Feltwell T."/>
            <person name="Hamlin N."/>
            <person name="Holroyd S."/>
            <person name="Jagels K."/>
            <person name="Leather S."/>
            <person name="Moule S."/>
            <person name="Mungall K.L."/>
            <person name="Quail M.A."/>
            <person name="Rajandream M.A."/>
            <person name="Rutherford K.M."/>
            <person name="Simmonds M."/>
            <person name="Skelton J."/>
            <person name="Whitehead S."/>
            <person name="Spratt B.G."/>
            <person name="Barrell B.G."/>
        </authorList>
    </citation>
    <scope>NUCLEOTIDE SEQUENCE [LARGE SCALE GENOMIC DNA]</scope>
    <source>
        <strain>DSM 15465 / Z2491</strain>
    </source>
</reference>
<feature type="chain" id="PRO_0000164564" description="D-aminoacyl-tRNA deacylase">
    <location>
        <begin position="1"/>
        <end position="163"/>
    </location>
</feature>
<feature type="short sequence motif" description="Gly-cisPro motif, important for rejection of L-amino acids" evidence="1">
    <location>
        <begin position="141"/>
        <end position="142"/>
    </location>
</feature>
<gene>
    <name evidence="1" type="primary">dtd</name>
    <name type="ordered locus">NMA2140</name>
</gene>
<evidence type="ECO:0000255" key="1">
    <source>
        <dbReference type="HAMAP-Rule" id="MF_00518"/>
    </source>
</evidence>
<sequence length="163" mass="17691">MRAVIQKTVGAKVDVVSENGTETCGKIDGGFVVLLGVTHSDIEKDARYVADKIAHLRVFEDGEGKLNLSLKDVGGSVLLVSQFTLYADAASGRRPSFSKAAPAEQAKRLYLHTAELLRGHGIHVETGRFRTHMQVSLCNDGPVTILLDSFMTRISPKMKVVPD</sequence>
<dbReference type="EC" id="3.1.1.96" evidence="1"/>
<dbReference type="EMBL" id="AL157959">
    <property type="protein sequence ID" value="CAM09237.1"/>
    <property type="molecule type" value="Genomic_DNA"/>
</dbReference>
<dbReference type="PIR" id="A81786">
    <property type="entry name" value="A81786"/>
</dbReference>
<dbReference type="RefSeq" id="WP_002218717.1">
    <property type="nucleotide sequence ID" value="NC_003116.1"/>
</dbReference>
<dbReference type="SMR" id="Q9JST7"/>
<dbReference type="EnsemblBacteria" id="CAM09237">
    <property type="protein sequence ID" value="CAM09237"/>
    <property type="gene ID" value="NMA2140"/>
</dbReference>
<dbReference type="GeneID" id="93387439"/>
<dbReference type="KEGG" id="nma:NMA2140"/>
<dbReference type="HOGENOM" id="CLU_076901_1_0_4"/>
<dbReference type="Proteomes" id="UP000000626">
    <property type="component" value="Chromosome"/>
</dbReference>
<dbReference type="GO" id="GO:0005737">
    <property type="term" value="C:cytoplasm"/>
    <property type="evidence" value="ECO:0007669"/>
    <property type="project" value="UniProtKB-SubCell"/>
</dbReference>
<dbReference type="GO" id="GO:0051500">
    <property type="term" value="F:D-tyrosyl-tRNA(Tyr) deacylase activity"/>
    <property type="evidence" value="ECO:0007669"/>
    <property type="project" value="TreeGrafter"/>
</dbReference>
<dbReference type="GO" id="GO:0106026">
    <property type="term" value="F:Gly-tRNA(Ala) deacylase activity"/>
    <property type="evidence" value="ECO:0007669"/>
    <property type="project" value="UniProtKB-UniRule"/>
</dbReference>
<dbReference type="GO" id="GO:0043908">
    <property type="term" value="F:Ser(Gly)-tRNA(Ala) hydrolase activity"/>
    <property type="evidence" value="ECO:0007669"/>
    <property type="project" value="UniProtKB-UniRule"/>
</dbReference>
<dbReference type="GO" id="GO:0000049">
    <property type="term" value="F:tRNA binding"/>
    <property type="evidence" value="ECO:0007669"/>
    <property type="project" value="UniProtKB-UniRule"/>
</dbReference>
<dbReference type="GO" id="GO:0019478">
    <property type="term" value="P:D-amino acid catabolic process"/>
    <property type="evidence" value="ECO:0007669"/>
    <property type="project" value="UniProtKB-UniRule"/>
</dbReference>
<dbReference type="CDD" id="cd00563">
    <property type="entry name" value="Dtyr_deacylase"/>
    <property type="match status" value="1"/>
</dbReference>
<dbReference type="FunFam" id="3.50.80.10:FF:000001">
    <property type="entry name" value="D-aminoacyl-tRNA deacylase"/>
    <property type="match status" value="1"/>
</dbReference>
<dbReference type="Gene3D" id="3.50.80.10">
    <property type="entry name" value="D-tyrosyl-tRNA(Tyr) deacylase"/>
    <property type="match status" value="1"/>
</dbReference>
<dbReference type="HAMAP" id="MF_00518">
    <property type="entry name" value="Deacylase_Dtd"/>
    <property type="match status" value="1"/>
</dbReference>
<dbReference type="InterPro" id="IPR003732">
    <property type="entry name" value="Daa-tRNA_deacyls_DTD"/>
</dbReference>
<dbReference type="InterPro" id="IPR023509">
    <property type="entry name" value="DTD-like_sf"/>
</dbReference>
<dbReference type="NCBIfam" id="TIGR00256">
    <property type="entry name" value="D-aminoacyl-tRNA deacylase"/>
    <property type="match status" value="1"/>
</dbReference>
<dbReference type="PANTHER" id="PTHR10472:SF5">
    <property type="entry name" value="D-AMINOACYL-TRNA DEACYLASE 1"/>
    <property type="match status" value="1"/>
</dbReference>
<dbReference type="PANTHER" id="PTHR10472">
    <property type="entry name" value="D-TYROSYL-TRNA TYR DEACYLASE"/>
    <property type="match status" value="1"/>
</dbReference>
<dbReference type="Pfam" id="PF02580">
    <property type="entry name" value="Tyr_Deacylase"/>
    <property type="match status" value="1"/>
</dbReference>
<dbReference type="SUPFAM" id="SSF69500">
    <property type="entry name" value="DTD-like"/>
    <property type="match status" value="1"/>
</dbReference>
<name>DTD_NEIMA</name>